<comment type="function">
    <text evidence="1">Reversibly transfers an adenylyl group from ATP to 4'-phosphopantetheine, yielding dephospho-CoA (dPCoA) and pyrophosphate.</text>
</comment>
<comment type="catalytic activity">
    <reaction evidence="1">
        <text>(R)-4'-phosphopantetheine + ATP + H(+) = 3'-dephospho-CoA + diphosphate</text>
        <dbReference type="Rhea" id="RHEA:19801"/>
        <dbReference type="ChEBI" id="CHEBI:15378"/>
        <dbReference type="ChEBI" id="CHEBI:30616"/>
        <dbReference type="ChEBI" id="CHEBI:33019"/>
        <dbReference type="ChEBI" id="CHEBI:57328"/>
        <dbReference type="ChEBI" id="CHEBI:61723"/>
        <dbReference type="EC" id="2.7.7.3"/>
    </reaction>
</comment>
<comment type="cofactor">
    <cofactor evidence="1">
        <name>Mg(2+)</name>
        <dbReference type="ChEBI" id="CHEBI:18420"/>
    </cofactor>
</comment>
<comment type="pathway">
    <text evidence="1">Cofactor biosynthesis; coenzyme A biosynthesis; CoA from (R)-pantothenate: step 4/5.</text>
</comment>
<comment type="subunit">
    <text evidence="1">Homohexamer.</text>
</comment>
<comment type="subcellular location">
    <subcellularLocation>
        <location evidence="1">Cytoplasm</location>
    </subcellularLocation>
</comment>
<comment type="similarity">
    <text evidence="1">Belongs to the bacterial CoaD family.</text>
</comment>
<name>COAD_CORDI</name>
<accession>Q6NHJ8</accession>
<reference key="1">
    <citation type="journal article" date="2003" name="Nucleic Acids Res.">
        <title>The complete genome sequence and analysis of Corynebacterium diphtheriae NCTC13129.</title>
        <authorList>
            <person name="Cerdeno-Tarraga A.-M."/>
            <person name="Efstratiou A."/>
            <person name="Dover L.G."/>
            <person name="Holden M.T.G."/>
            <person name="Pallen M.J."/>
            <person name="Bentley S.D."/>
            <person name="Besra G.S."/>
            <person name="Churcher C.M."/>
            <person name="James K.D."/>
            <person name="De Zoysa A."/>
            <person name="Chillingworth T."/>
            <person name="Cronin A."/>
            <person name="Dowd L."/>
            <person name="Feltwell T."/>
            <person name="Hamlin N."/>
            <person name="Holroyd S."/>
            <person name="Jagels K."/>
            <person name="Moule S."/>
            <person name="Quail M.A."/>
            <person name="Rabbinowitsch E."/>
            <person name="Rutherford K.M."/>
            <person name="Thomson N.R."/>
            <person name="Unwin L."/>
            <person name="Whitehead S."/>
            <person name="Barrell B.G."/>
            <person name="Parkhill J."/>
        </authorList>
    </citation>
    <scope>NUCLEOTIDE SEQUENCE [LARGE SCALE GENOMIC DNA]</scope>
    <source>
        <strain>ATCC 700971 / NCTC 13129 / Biotype gravis</strain>
    </source>
</reference>
<gene>
    <name evidence="1" type="primary">coaD</name>
    <name type="ordered locus">DIP1139</name>
</gene>
<keyword id="KW-0067">ATP-binding</keyword>
<keyword id="KW-0173">Coenzyme A biosynthesis</keyword>
<keyword id="KW-0963">Cytoplasm</keyword>
<keyword id="KW-0460">Magnesium</keyword>
<keyword id="KW-0547">Nucleotide-binding</keyword>
<keyword id="KW-0548">Nucleotidyltransferase</keyword>
<keyword id="KW-1185">Reference proteome</keyword>
<keyword id="KW-0808">Transferase</keyword>
<proteinExistence type="inferred from homology"/>
<protein>
    <recommendedName>
        <fullName evidence="1">Phosphopantetheine adenylyltransferase</fullName>
        <ecNumber evidence="1">2.7.7.3</ecNumber>
    </recommendedName>
    <alternativeName>
        <fullName evidence="1">Dephospho-CoA pyrophosphorylase</fullName>
    </alternativeName>
    <alternativeName>
        <fullName evidence="1">Pantetheine-phosphate adenylyltransferase</fullName>
        <shortName evidence="1">PPAT</shortName>
    </alternativeName>
</protein>
<dbReference type="EC" id="2.7.7.3" evidence="1"/>
<dbReference type="EMBL" id="BX248357">
    <property type="protein sequence ID" value="CAE49659.1"/>
    <property type="molecule type" value="Genomic_DNA"/>
</dbReference>
<dbReference type="RefSeq" id="WP_010934833.1">
    <property type="nucleotide sequence ID" value="NC_002935.2"/>
</dbReference>
<dbReference type="SMR" id="Q6NHJ8"/>
<dbReference type="STRING" id="257309.DIP1139"/>
<dbReference type="KEGG" id="cdi:DIP1139"/>
<dbReference type="HOGENOM" id="CLU_100149_1_0_11"/>
<dbReference type="UniPathway" id="UPA00241">
    <property type="reaction ID" value="UER00355"/>
</dbReference>
<dbReference type="Proteomes" id="UP000002198">
    <property type="component" value="Chromosome"/>
</dbReference>
<dbReference type="GO" id="GO:0005737">
    <property type="term" value="C:cytoplasm"/>
    <property type="evidence" value="ECO:0007669"/>
    <property type="project" value="UniProtKB-SubCell"/>
</dbReference>
<dbReference type="GO" id="GO:0005524">
    <property type="term" value="F:ATP binding"/>
    <property type="evidence" value="ECO:0007669"/>
    <property type="project" value="UniProtKB-KW"/>
</dbReference>
<dbReference type="GO" id="GO:0004595">
    <property type="term" value="F:pantetheine-phosphate adenylyltransferase activity"/>
    <property type="evidence" value="ECO:0007669"/>
    <property type="project" value="UniProtKB-UniRule"/>
</dbReference>
<dbReference type="GO" id="GO:0015937">
    <property type="term" value="P:coenzyme A biosynthetic process"/>
    <property type="evidence" value="ECO:0007669"/>
    <property type="project" value="UniProtKB-UniRule"/>
</dbReference>
<dbReference type="CDD" id="cd02163">
    <property type="entry name" value="PPAT"/>
    <property type="match status" value="1"/>
</dbReference>
<dbReference type="Gene3D" id="3.40.50.620">
    <property type="entry name" value="HUPs"/>
    <property type="match status" value="1"/>
</dbReference>
<dbReference type="HAMAP" id="MF_00151">
    <property type="entry name" value="PPAT_bact"/>
    <property type="match status" value="1"/>
</dbReference>
<dbReference type="InterPro" id="IPR004821">
    <property type="entry name" value="Cyt_trans-like"/>
</dbReference>
<dbReference type="InterPro" id="IPR001980">
    <property type="entry name" value="PPAT"/>
</dbReference>
<dbReference type="InterPro" id="IPR014729">
    <property type="entry name" value="Rossmann-like_a/b/a_fold"/>
</dbReference>
<dbReference type="NCBIfam" id="TIGR01510">
    <property type="entry name" value="coaD_prev_kdtB"/>
    <property type="match status" value="1"/>
</dbReference>
<dbReference type="NCBIfam" id="TIGR00125">
    <property type="entry name" value="cyt_tran_rel"/>
    <property type="match status" value="1"/>
</dbReference>
<dbReference type="PANTHER" id="PTHR21342">
    <property type="entry name" value="PHOSPHOPANTETHEINE ADENYLYLTRANSFERASE"/>
    <property type="match status" value="1"/>
</dbReference>
<dbReference type="PANTHER" id="PTHR21342:SF1">
    <property type="entry name" value="PHOSPHOPANTETHEINE ADENYLYLTRANSFERASE"/>
    <property type="match status" value="1"/>
</dbReference>
<dbReference type="Pfam" id="PF01467">
    <property type="entry name" value="CTP_transf_like"/>
    <property type="match status" value="1"/>
</dbReference>
<dbReference type="PRINTS" id="PR01020">
    <property type="entry name" value="LPSBIOSNTHSS"/>
</dbReference>
<dbReference type="SUPFAM" id="SSF52374">
    <property type="entry name" value="Nucleotidylyl transferase"/>
    <property type="match status" value="1"/>
</dbReference>
<evidence type="ECO:0000255" key="1">
    <source>
        <dbReference type="HAMAP-Rule" id="MF_00151"/>
    </source>
</evidence>
<feature type="chain" id="PRO_0000156197" description="Phosphopantetheine adenylyltransferase">
    <location>
        <begin position="1"/>
        <end position="159"/>
    </location>
</feature>
<feature type="binding site" evidence="1">
    <location>
        <begin position="9"/>
        <end position="10"/>
    </location>
    <ligand>
        <name>ATP</name>
        <dbReference type="ChEBI" id="CHEBI:30616"/>
    </ligand>
</feature>
<feature type="binding site" evidence="1">
    <location>
        <position position="9"/>
    </location>
    <ligand>
        <name>substrate</name>
    </ligand>
</feature>
<feature type="binding site" evidence="1">
    <location>
        <position position="17"/>
    </location>
    <ligand>
        <name>ATP</name>
        <dbReference type="ChEBI" id="CHEBI:30616"/>
    </ligand>
</feature>
<feature type="binding site" evidence="1">
    <location>
        <position position="41"/>
    </location>
    <ligand>
        <name>substrate</name>
    </ligand>
</feature>
<feature type="binding site" evidence="1">
    <location>
        <position position="74"/>
    </location>
    <ligand>
        <name>substrate</name>
    </ligand>
</feature>
<feature type="binding site" evidence="1">
    <location>
        <position position="88"/>
    </location>
    <ligand>
        <name>substrate</name>
    </ligand>
</feature>
<feature type="binding site" evidence="1">
    <location>
        <begin position="89"/>
        <end position="91"/>
    </location>
    <ligand>
        <name>ATP</name>
        <dbReference type="ChEBI" id="CHEBI:30616"/>
    </ligand>
</feature>
<feature type="binding site" evidence="1">
    <location>
        <position position="99"/>
    </location>
    <ligand>
        <name>ATP</name>
        <dbReference type="ChEBI" id="CHEBI:30616"/>
    </ligand>
</feature>
<feature type="binding site" evidence="1">
    <location>
        <begin position="123"/>
        <end position="129"/>
    </location>
    <ligand>
        <name>ATP</name>
        <dbReference type="ChEBI" id="CHEBI:30616"/>
    </ligand>
</feature>
<feature type="site" description="Transition state stabilizer" evidence="1">
    <location>
        <position position="17"/>
    </location>
</feature>
<organism>
    <name type="scientific">Corynebacterium diphtheriae (strain ATCC 700971 / NCTC 13129 / Biotype gravis)</name>
    <dbReference type="NCBI Taxonomy" id="257309"/>
    <lineage>
        <taxon>Bacteria</taxon>
        <taxon>Bacillati</taxon>
        <taxon>Actinomycetota</taxon>
        <taxon>Actinomycetes</taxon>
        <taxon>Mycobacteriales</taxon>
        <taxon>Corynebacteriaceae</taxon>
        <taxon>Corynebacterium</taxon>
    </lineage>
</organism>
<sequence>MRKAVCPGSFDPVTMGHLDIIGRAAQQYDEVTVLVTANPNKPSGMFTVDERLALIKESTAHFVNVKVDNWAGLLVDYTTANGIDAIVKGLRTALDYEYELPMAQMNRKLAGVDTLFLMTDPQYGYISSTLCKEVTKYGGDVSDMLPPAVAAAIVEKVKS</sequence>